<proteinExistence type="evidence at protein level"/>
<dbReference type="EMBL" id="AP006878">
    <property type="protein sequence ID" value="BAD84724.1"/>
    <property type="molecule type" value="Genomic_DNA"/>
</dbReference>
<dbReference type="RefSeq" id="WP_011249490.1">
    <property type="nucleotide sequence ID" value="NC_006624.1"/>
</dbReference>
<dbReference type="PDB" id="3LX1">
    <property type="method" value="X-ray"/>
    <property type="resolution" value="2.00 A"/>
    <property type="chains" value="A=1-249"/>
</dbReference>
<dbReference type="PDB" id="5DA7">
    <property type="method" value="X-ray"/>
    <property type="resolution" value="2.80 A"/>
    <property type="chains" value="A/D=1-249"/>
</dbReference>
<dbReference type="PDB" id="5DAI">
    <property type="method" value="X-ray"/>
    <property type="resolution" value="2.00 A"/>
    <property type="chains" value="A=1-249"/>
</dbReference>
<dbReference type="PDB" id="6KNB">
    <property type="method" value="EM"/>
    <property type="resolution" value="6.90 A"/>
    <property type="chains" value="C/D/E=1-249"/>
</dbReference>
<dbReference type="PDB" id="6KNC">
    <property type="method" value="EM"/>
    <property type="resolution" value="9.30 A"/>
    <property type="chains" value="C/D/E=1-249"/>
</dbReference>
<dbReference type="PDBsum" id="3LX1"/>
<dbReference type="PDBsum" id="5DA7"/>
<dbReference type="PDBsum" id="5DAI"/>
<dbReference type="PDBsum" id="6KNB"/>
<dbReference type="PDBsum" id="6KNC"/>
<dbReference type="SMR" id="Q5JF32"/>
<dbReference type="DIP" id="DIP-59610N"/>
<dbReference type="FunCoup" id="Q5JF32">
    <property type="interactions" value="162"/>
</dbReference>
<dbReference type="STRING" id="69014.TK0535"/>
<dbReference type="EnsemblBacteria" id="BAD84724">
    <property type="protein sequence ID" value="BAD84724"/>
    <property type="gene ID" value="TK0535"/>
</dbReference>
<dbReference type="GeneID" id="78447048"/>
<dbReference type="KEGG" id="tko:TK0535"/>
<dbReference type="PATRIC" id="fig|69014.16.peg.523"/>
<dbReference type="eggNOG" id="arCOG00488">
    <property type="taxonomic scope" value="Archaea"/>
</dbReference>
<dbReference type="HOGENOM" id="CLU_043978_1_0_2"/>
<dbReference type="InParanoid" id="Q5JF32"/>
<dbReference type="OrthoDB" id="14749at2157"/>
<dbReference type="PhylomeDB" id="Q5JF32"/>
<dbReference type="EvolutionaryTrace" id="Q5JF32"/>
<dbReference type="Proteomes" id="UP000000536">
    <property type="component" value="Chromosome"/>
</dbReference>
<dbReference type="GO" id="GO:0003677">
    <property type="term" value="F:DNA binding"/>
    <property type="evidence" value="ECO:0007669"/>
    <property type="project" value="UniProtKB-UniRule"/>
</dbReference>
<dbReference type="GO" id="GO:0030337">
    <property type="term" value="F:DNA polymerase processivity factor activity"/>
    <property type="evidence" value="ECO:0000318"/>
    <property type="project" value="GO_Central"/>
</dbReference>
<dbReference type="GO" id="GO:0042802">
    <property type="term" value="F:identical protein binding"/>
    <property type="evidence" value="ECO:0000353"/>
    <property type="project" value="IntAct"/>
</dbReference>
<dbReference type="GO" id="GO:0006272">
    <property type="term" value="P:leading strand elongation"/>
    <property type="evidence" value="ECO:0000318"/>
    <property type="project" value="GO_Central"/>
</dbReference>
<dbReference type="GO" id="GO:0006275">
    <property type="term" value="P:regulation of DNA replication"/>
    <property type="evidence" value="ECO:0007669"/>
    <property type="project" value="UniProtKB-UniRule"/>
</dbReference>
<dbReference type="CDD" id="cd00577">
    <property type="entry name" value="PCNA"/>
    <property type="match status" value="1"/>
</dbReference>
<dbReference type="FunFam" id="3.70.10.10:FF:000038">
    <property type="entry name" value="DNA polymerase sliding clamp 1"/>
    <property type="match status" value="1"/>
</dbReference>
<dbReference type="Gene3D" id="3.70.10.10">
    <property type="match status" value="1"/>
</dbReference>
<dbReference type="HAMAP" id="MF_00317">
    <property type="entry name" value="DNApol_clamp_arch"/>
    <property type="match status" value="1"/>
</dbReference>
<dbReference type="InterPro" id="IPR046938">
    <property type="entry name" value="DNA_clamp_sf"/>
</dbReference>
<dbReference type="InterPro" id="IPR000730">
    <property type="entry name" value="Pr_cel_nuc_antig"/>
</dbReference>
<dbReference type="InterPro" id="IPR022649">
    <property type="entry name" value="Pr_cel_nuc_antig_C"/>
</dbReference>
<dbReference type="InterPro" id="IPR022659">
    <property type="entry name" value="Pr_cel_nuc_antig_CS"/>
</dbReference>
<dbReference type="InterPro" id="IPR022648">
    <property type="entry name" value="Pr_cel_nuc_antig_N"/>
</dbReference>
<dbReference type="NCBIfam" id="TIGR00590">
    <property type="entry name" value="pcna"/>
    <property type="match status" value="1"/>
</dbReference>
<dbReference type="NCBIfam" id="NF002219">
    <property type="entry name" value="PRK01115.1-2"/>
    <property type="match status" value="1"/>
</dbReference>
<dbReference type="NCBIfam" id="NF002221">
    <property type="entry name" value="PRK01115.1-4"/>
    <property type="match status" value="1"/>
</dbReference>
<dbReference type="PANTHER" id="PTHR11352">
    <property type="entry name" value="PROLIFERATING CELL NUCLEAR ANTIGEN"/>
    <property type="match status" value="1"/>
</dbReference>
<dbReference type="PANTHER" id="PTHR11352:SF0">
    <property type="entry name" value="PROLIFERATING CELL NUCLEAR ANTIGEN"/>
    <property type="match status" value="1"/>
</dbReference>
<dbReference type="Pfam" id="PF02747">
    <property type="entry name" value="PCNA_C"/>
    <property type="match status" value="1"/>
</dbReference>
<dbReference type="Pfam" id="PF00705">
    <property type="entry name" value="PCNA_N"/>
    <property type="match status" value="1"/>
</dbReference>
<dbReference type="PRINTS" id="PR00339">
    <property type="entry name" value="PCNACYCLIN"/>
</dbReference>
<dbReference type="SUPFAM" id="SSF55979">
    <property type="entry name" value="DNA clamp"/>
    <property type="match status" value="2"/>
</dbReference>
<dbReference type="PROSITE" id="PS01251">
    <property type="entry name" value="PCNA_1"/>
    <property type="match status" value="1"/>
</dbReference>
<protein>
    <recommendedName>
        <fullName evidence="1">DNA polymerase sliding clamp 1</fullName>
    </recommendedName>
    <alternativeName>
        <fullName evidence="1">Proliferating cell nuclear antigen homolog 1</fullName>
        <shortName evidence="1">PCNA 1</shortName>
    </alternativeName>
</protein>
<accession>Q5JF32</accession>
<evidence type="ECO:0000255" key="1">
    <source>
        <dbReference type="HAMAP-Rule" id="MF_00317"/>
    </source>
</evidence>
<evidence type="ECO:0000269" key="2">
    <source>
    </source>
</evidence>
<evidence type="ECO:0000269" key="3">
    <source>
    </source>
</evidence>
<evidence type="ECO:0007744" key="4">
    <source>
        <dbReference type="PDB" id="5DA7"/>
    </source>
</evidence>
<evidence type="ECO:0007744" key="5">
    <source>
        <dbReference type="PDB" id="5DAI"/>
    </source>
</evidence>
<evidence type="ECO:0007829" key="6">
    <source>
        <dbReference type="PDB" id="3LX1"/>
    </source>
</evidence>
<comment type="function">
    <text evidence="1">Sliding clamp subunit that acts as a moving platform for DNA processing. Responsible for tethering the catalytic subunit of DNA polymerase and other proteins to DNA during high-speed replication.</text>
</comment>
<comment type="activity regulation">
    <text evidence="2 3">Inhibited by interaction with the PCNA inhibitor TIP.</text>
</comment>
<comment type="subunit">
    <text evidence="1 2 3">Homotrimer (PubMed:27141962). The subunits circularize to form a toroid; DNA passes through its center. Replication factor C (RFC) is required to load the toroid on the DNA (By similarity). Interacts with TIP (PubMed:24728986, PubMed:27141962).</text>
</comment>
<comment type="interaction">
    <interactant intactId="EBI-15908613">
        <id>Q5JF32</id>
    </interactant>
    <interactant intactId="EBI-15908613">
        <id>Q5JF32</id>
        <label>pcn1</label>
    </interactant>
    <organismsDiffer>false</organismsDiffer>
    <experiments>3</experiments>
</comment>
<comment type="similarity">
    <text evidence="1">Belongs to the PCNA family.</text>
</comment>
<sequence length="249" mass="28239">MPFEVVFDGAKEFADLIATASNLIDEAAFKFTEEGISMRAMDPSRVVLIDLNLPESIFSKYEVEEPETIGINMDQFKKILKRGKAKDTLILRKGDENFLEITFEGTAKRTFRLPLIDVEELELELPELPFTAKVVLLGEVLKEGIKDASLVSDAIKFIAKENEFTMKAEGETNEVEIRLTLEDEGLLDLEVEEETKSAYGIRYLSDMVKGIGKADEVILRFGNEMPLQMEYMIRDEGRLTFLLAPRVEE</sequence>
<feature type="chain" id="PRO_0000149208" description="DNA polymerase sliding clamp 1">
    <location>
        <begin position="1"/>
        <end position="249"/>
    </location>
</feature>
<feature type="strand" evidence="6">
    <location>
        <begin position="3"/>
        <end position="8"/>
    </location>
</feature>
<feature type="helix" evidence="6">
    <location>
        <begin position="10"/>
        <end position="23"/>
    </location>
</feature>
<feature type="strand" evidence="6">
    <location>
        <begin position="25"/>
        <end position="31"/>
    </location>
</feature>
<feature type="strand" evidence="6">
    <location>
        <begin position="33"/>
        <end position="41"/>
    </location>
</feature>
<feature type="strand" evidence="6">
    <location>
        <begin position="47"/>
        <end position="54"/>
    </location>
</feature>
<feature type="helix" evidence="6">
    <location>
        <begin position="55"/>
        <end position="57"/>
    </location>
</feature>
<feature type="strand" evidence="6">
    <location>
        <begin position="58"/>
        <end position="65"/>
    </location>
</feature>
<feature type="strand" evidence="6">
    <location>
        <begin position="67"/>
        <end position="72"/>
    </location>
</feature>
<feature type="helix" evidence="6">
    <location>
        <begin position="73"/>
        <end position="80"/>
    </location>
</feature>
<feature type="strand" evidence="6">
    <location>
        <begin position="88"/>
        <end position="93"/>
    </location>
</feature>
<feature type="strand" evidence="6">
    <location>
        <begin position="95"/>
        <end position="114"/>
    </location>
</feature>
<feature type="strand" evidence="6">
    <location>
        <begin position="132"/>
        <end position="137"/>
    </location>
</feature>
<feature type="helix" evidence="6">
    <location>
        <begin position="138"/>
        <end position="151"/>
    </location>
</feature>
<feature type="strand" evidence="6">
    <location>
        <begin position="153"/>
        <end position="160"/>
    </location>
</feature>
<feature type="strand" evidence="6">
    <location>
        <begin position="163"/>
        <end position="169"/>
    </location>
</feature>
<feature type="strand" evidence="6">
    <location>
        <begin position="174"/>
        <end position="180"/>
    </location>
</feature>
<feature type="strand" evidence="6">
    <location>
        <begin position="186"/>
        <end position="193"/>
    </location>
</feature>
<feature type="strand" evidence="6">
    <location>
        <begin position="195"/>
        <end position="200"/>
    </location>
</feature>
<feature type="helix" evidence="6">
    <location>
        <begin position="201"/>
        <end position="208"/>
    </location>
</feature>
<feature type="strand" evidence="6">
    <location>
        <begin position="216"/>
        <end position="221"/>
    </location>
</feature>
<feature type="strand" evidence="6">
    <location>
        <begin position="227"/>
        <end position="233"/>
    </location>
</feature>
<feature type="turn" evidence="6">
    <location>
        <begin position="234"/>
        <end position="236"/>
    </location>
</feature>
<feature type="strand" evidence="6">
    <location>
        <begin position="237"/>
        <end position="243"/>
    </location>
</feature>
<gene>
    <name evidence="1" type="primary">pcn1</name>
    <name type="ordered locus">TK0535</name>
</gene>
<keyword id="KW-0002">3D-structure</keyword>
<keyword id="KW-0235">DNA replication</keyword>
<keyword id="KW-0238">DNA-binding</keyword>
<keyword id="KW-1185">Reference proteome</keyword>
<name>PCNA1_THEKO</name>
<reference key="1">
    <citation type="journal article" date="2005" name="Genome Res.">
        <title>Complete genome sequence of the hyperthermophilic archaeon Thermococcus kodakaraensis KOD1 and comparison with Pyrococcus genomes.</title>
        <authorList>
            <person name="Fukui T."/>
            <person name="Atomi H."/>
            <person name="Kanai T."/>
            <person name="Matsumi R."/>
            <person name="Fujiwara S."/>
            <person name="Imanaka T."/>
        </authorList>
    </citation>
    <scope>NUCLEOTIDE SEQUENCE [LARGE SCALE GENOMIC DNA]</scope>
    <source>
        <strain>ATCC BAA-918 / JCM 12380 / KOD1</strain>
    </source>
</reference>
<reference key="2">
    <citation type="journal article" date="2014" name="Nucleic Acids Res.">
        <title>A novel mechanism for regulating the activity of proliferating cell nuclear antigen by a small protein.</title>
        <authorList>
            <person name="Li Z."/>
            <person name="Huang R.Y."/>
            <person name="Yopp D.C."/>
            <person name="Hileman T.H."/>
            <person name="Santangelo T.J."/>
            <person name="Hurwitz J."/>
            <person name="Hudgens J.W."/>
            <person name="Kelman Z."/>
        </authorList>
    </citation>
    <scope>ACTIVITY REGULATION</scope>
    <scope>INTERACTION WITH TIP</scope>
</reference>
<reference evidence="4 5" key="3">
    <citation type="journal article" date="2016" name="Nucleic Acids Res.">
        <title>A small protein inhibits proliferating cell nuclear antigen by breaking the DNA clamp.</title>
        <authorList>
            <person name="Altieri A.S."/>
            <person name="Ladner J.E."/>
            <person name="Li Z."/>
            <person name="Robinson H."/>
            <person name="Sallman Z.F."/>
            <person name="Marino J.P."/>
            <person name="Kelman Z."/>
        </authorList>
    </citation>
    <scope>X-RAY CRYSTALLOGRAPHY (2.00 ANGSTROMS) IN COMPLEX WITH TIP</scope>
    <scope>ACTIVITY REGULATION</scope>
    <scope>SUBUNIT</scope>
    <scope>INTERACTION WITH TIP</scope>
</reference>
<organism>
    <name type="scientific">Thermococcus kodakarensis (strain ATCC BAA-918 / JCM 12380 / KOD1)</name>
    <name type="common">Pyrococcus kodakaraensis (strain KOD1)</name>
    <dbReference type="NCBI Taxonomy" id="69014"/>
    <lineage>
        <taxon>Archaea</taxon>
        <taxon>Methanobacteriati</taxon>
        <taxon>Methanobacteriota</taxon>
        <taxon>Thermococci</taxon>
        <taxon>Thermococcales</taxon>
        <taxon>Thermococcaceae</taxon>
        <taxon>Thermococcus</taxon>
    </lineage>
</organism>